<sequence>MAAIMSSYLFRGILMNLRFAQFLKNISSFESRIEKLSDIINYGRLVSINGLILEVVGLNTSIGSECLIERTIDGKNANINAEVIGFSGEKTFLLSFEDIHGIFPGARVFSKIASNSNFFIKKLPLGMELLGRVLDGRGQPLDQLPKIDHKYYSTIKNYSINPLNRTPITEVLDTGIRAINGLLTIGRGQKIGIFSSSGIGKSILLGMIARYTQADIIVIALIGERGREVKDFIENILGLAGLSRSVIIAAPADVSPLLKIKAASYATNIAEYFYKNNKHVLLIMDSLTRYAMAQREISLSLGELPVSKGYPSSIFSKIPNLIERTGIFNKNKGSITSFYTVLTEGEDEQDPVSHLARSVLDGHIMLSRYYADLGHYPAIDIESSISRVMPNIINAKQYSQAFYFKKLVASYQRNRDLINIGAYVSGTDVILDHAIKIWPKLEKFLQQEISEKSDYLFSCEALNKIFI</sequence>
<protein>
    <recommendedName>
        <fullName>Flagellum-specific ATP synthase</fullName>
        <ecNumber>7.1.2.2</ecNumber>
    </recommendedName>
</protein>
<proteinExistence type="inferred from homology"/>
<name>FLII_BUCAI</name>
<keyword id="KW-0066">ATP synthesis</keyword>
<keyword id="KW-0067">ATP-binding</keyword>
<keyword id="KW-1005">Bacterial flagellum biogenesis</keyword>
<keyword id="KW-1006">Bacterial flagellum protein export</keyword>
<keyword id="KW-0963">Cytoplasm</keyword>
<keyword id="KW-0375">Hydrogen ion transport</keyword>
<keyword id="KW-0406">Ion transport</keyword>
<keyword id="KW-0547">Nucleotide-binding</keyword>
<keyword id="KW-0653">Protein transport</keyword>
<keyword id="KW-1185">Reference proteome</keyword>
<keyword id="KW-1278">Translocase</keyword>
<keyword id="KW-0813">Transport</keyword>
<dbReference type="EC" id="7.1.2.2"/>
<dbReference type="EMBL" id="BA000003">
    <property type="protein sequence ID" value="BAB12796.1"/>
    <property type="molecule type" value="Genomic_DNA"/>
</dbReference>
<dbReference type="RefSeq" id="NP_239910.1">
    <property type="nucleotide sequence ID" value="NC_002528.1"/>
</dbReference>
<dbReference type="RefSeq" id="WP_010895929.1">
    <property type="nucleotide sequence ID" value="NZ_AP036055.1"/>
</dbReference>
<dbReference type="SMR" id="P57178"/>
<dbReference type="STRING" id="563178.BUAP5A_075"/>
<dbReference type="EnsemblBacteria" id="BAB12796">
    <property type="protein sequence ID" value="BAB12796"/>
    <property type="gene ID" value="BAB12796"/>
</dbReference>
<dbReference type="KEGG" id="buc:BU076"/>
<dbReference type="PATRIC" id="fig|107806.10.peg.82"/>
<dbReference type="eggNOG" id="COG1157">
    <property type="taxonomic scope" value="Bacteria"/>
</dbReference>
<dbReference type="HOGENOM" id="CLU_022398_5_1_6"/>
<dbReference type="Proteomes" id="UP000001806">
    <property type="component" value="Chromosome"/>
</dbReference>
<dbReference type="GO" id="GO:0005737">
    <property type="term" value="C:cytoplasm"/>
    <property type="evidence" value="ECO:0007669"/>
    <property type="project" value="UniProtKB-SubCell"/>
</dbReference>
<dbReference type="GO" id="GO:0030257">
    <property type="term" value="C:type III protein secretion system complex"/>
    <property type="evidence" value="ECO:0007669"/>
    <property type="project" value="InterPro"/>
</dbReference>
<dbReference type="GO" id="GO:0005524">
    <property type="term" value="F:ATP binding"/>
    <property type="evidence" value="ECO:0007669"/>
    <property type="project" value="UniProtKB-KW"/>
</dbReference>
<dbReference type="GO" id="GO:0016887">
    <property type="term" value="F:ATP hydrolysis activity"/>
    <property type="evidence" value="ECO:0007669"/>
    <property type="project" value="InterPro"/>
</dbReference>
<dbReference type="GO" id="GO:0046933">
    <property type="term" value="F:proton-transporting ATP synthase activity, rotational mechanism"/>
    <property type="evidence" value="ECO:0007669"/>
    <property type="project" value="TreeGrafter"/>
</dbReference>
<dbReference type="GO" id="GO:0044781">
    <property type="term" value="P:bacterial-type flagellum organization"/>
    <property type="evidence" value="ECO:0007669"/>
    <property type="project" value="UniProtKB-KW"/>
</dbReference>
<dbReference type="GO" id="GO:0030254">
    <property type="term" value="P:protein secretion by the type III secretion system"/>
    <property type="evidence" value="ECO:0007669"/>
    <property type="project" value="InterPro"/>
</dbReference>
<dbReference type="CDD" id="cd18117">
    <property type="entry name" value="ATP-synt_flagellum-secretory_path_III_N"/>
    <property type="match status" value="1"/>
</dbReference>
<dbReference type="CDD" id="cd01136">
    <property type="entry name" value="ATPase_flagellum-secretory_path_III"/>
    <property type="match status" value="1"/>
</dbReference>
<dbReference type="FunFam" id="3.40.50.12240:FF:000002">
    <property type="entry name" value="Flagellum-specific ATP synthase FliI"/>
    <property type="match status" value="1"/>
</dbReference>
<dbReference type="Gene3D" id="3.40.50.12240">
    <property type="match status" value="1"/>
</dbReference>
<dbReference type="InterPro" id="IPR003593">
    <property type="entry name" value="AAA+_ATPase"/>
</dbReference>
<dbReference type="InterPro" id="IPR050053">
    <property type="entry name" value="ATPase_alpha/beta_chains"/>
</dbReference>
<dbReference type="InterPro" id="IPR000194">
    <property type="entry name" value="ATPase_F1/V1/A1_a/bsu_nucl-bd"/>
</dbReference>
<dbReference type="InterPro" id="IPR005714">
    <property type="entry name" value="ATPase_T3SS_FliI/YscN"/>
</dbReference>
<dbReference type="InterPro" id="IPR027417">
    <property type="entry name" value="P-loop_NTPase"/>
</dbReference>
<dbReference type="InterPro" id="IPR040627">
    <property type="entry name" value="T3SS_ATPase_C"/>
</dbReference>
<dbReference type="NCBIfam" id="TIGR01026">
    <property type="entry name" value="fliI_yscN"/>
    <property type="match status" value="1"/>
</dbReference>
<dbReference type="PANTHER" id="PTHR15184">
    <property type="entry name" value="ATP SYNTHASE"/>
    <property type="match status" value="1"/>
</dbReference>
<dbReference type="PANTHER" id="PTHR15184:SF81">
    <property type="entry name" value="FLAGELLUM-SPECIFIC ATP SYNTHASE"/>
    <property type="match status" value="1"/>
</dbReference>
<dbReference type="Pfam" id="PF00006">
    <property type="entry name" value="ATP-synt_ab"/>
    <property type="match status" value="1"/>
</dbReference>
<dbReference type="Pfam" id="PF18269">
    <property type="entry name" value="T3SS_ATPase_C"/>
    <property type="match status" value="1"/>
</dbReference>
<dbReference type="SMART" id="SM00382">
    <property type="entry name" value="AAA"/>
    <property type="match status" value="1"/>
</dbReference>
<dbReference type="SUPFAM" id="SSF52540">
    <property type="entry name" value="P-loop containing nucleoside triphosphate hydrolases"/>
    <property type="match status" value="1"/>
</dbReference>
<reference key="1">
    <citation type="journal article" date="2000" name="Nature">
        <title>Genome sequence of the endocellular bacterial symbiont of aphids Buchnera sp. APS.</title>
        <authorList>
            <person name="Shigenobu S."/>
            <person name="Watanabe H."/>
            <person name="Hattori M."/>
            <person name="Sakaki Y."/>
            <person name="Ishikawa H."/>
        </authorList>
    </citation>
    <scope>NUCLEOTIDE SEQUENCE [LARGE SCALE GENOMIC DNA]</scope>
    <source>
        <strain>APS</strain>
    </source>
</reference>
<comment type="function">
    <text evidence="1">Probable catalytic subunit of a protein translocase for flagellum-specific export, or a proton translocase involved in local circuits at the flagellum. May be involved in a specialized protein export pathway that proceeds without signal peptide cleavage (By similarity).</text>
</comment>
<comment type="catalytic activity">
    <reaction>
        <text>ATP + H2O + 4 H(+)(in) = ADP + phosphate + 5 H(+)(out)</text>
        <dbReference type="Rhea" id="RHEA:57720"/>
        <dbReference type="ChEBI" id="CHEBI:15377"/>
        <dbReference type="ChEBI" id="CHEBI:15378"/>
        <dbReference type="ChEBI" id="CHEBI:30616"/>
        <dbReference type="ChEBI" id="CHEBI:43474"/>
        <dbReference type="ChEBI" id="CHEBI:456216"/>
        <dbReference type="EC" id="7.1.2.2"/>
    </reaction>
</comment>
<comment type="subcellular location">
    <subcellularLocation>
        <location evidence="2">Cytoplasm</location>
    </subcellularLocation>
</comment>
<comment type="similarity">
    <text evidence="2">Belongs to the ATPase alpha/beta chains family.</text>
</comment>
<gene>
    <name type="primary">fliI</name>
    <name type="ordered locus">BU076</name>
</gene>
<evidence type="ECO:0000250" key="1"/>
<evidence type="ECO:0000305" key="2"/>
<accession>P57178</accession>
<organism>
    <name type="scientific">Buchnera aphidicola subsp. Acyrthosiphon pisum (strain APS)</name>
    <name type="common">Acyrthosiphon pisum symbiotic bacterium</name>
    <dbReference type="NCBI Taxonomy" id="107806"/>
    <lineage>
        <taxon>Bacteria</taxon>
        <taxon>Pseudomonadati</taxon>
        <taxon>Pseudomonadota</taxon>
        <taxon>Gammaproteobacteria</taxon>
        <taxon>Enterobacterales</taxon>
        <taxon>Erwiniaceae</taxon>
        <taxon>Buchnera</taxon>
    </lineage>
</organism>
<feature type="chain" id="PRO_0000144690" description="Flagellum-specific ATP synthase">
    <location>
        <begin position="1"/>
        <end position="467"/>
    </location>
</feature>
<feature type="binding site" evidence="1">
    <location>
        <begin position="195"/>
        <end position="202"/>
    </location>
    <ligand>
        <name>ATP</name>
        <dbReference type="ChEBI" id="CHEBI:30616"/>
    </ligand>
</feature>